<accession>O43829</accession>
<accession>O00403</accession>
<accession>Q2TB80</accession>
<dbReference type="EMBL" id="Y12726">
    <property type="protein sequence ID" value="CAA73258.1"/>
    <property type="molecule type" value="mRNA"/>
</dbReference>
<dbReference type="EMBL" id="D89859">
    <property type="protein sequence ID" value="BAA20131.1"/>
    <property type="molecule type" value="mRNA"/>
</dbReference>
<dbReference type="EMBL" id="BC110519">
    <property type="protein sequence ID" value="AAI10520.1"/>
    <property type="molecule type" value="mRNA"/>
</dbReference>
<dbReference type="CCDS" id="CCDS11837.1"/>
<dbReference type="RefSeq" id="NP_001137295.1">
    <property type="nucleotide sequence ID" value="NM_001143823.3"/>
</dbReference>
<dbReference type="RefSeq" id="NP_001230631.1">
    <property type="nucleotide sequence ID" value="NM_001243702.2"/>
</dbReference>
<dbReference type="RefSeq" id="NP_001230633.1">
    <property type="nucleotide sequence ID" value="NM_001243704.2"/>
</dbReference>
<dbReference type="RefSeq" id="NP_003400.2">
    <property type="nucleotide sequence ID" value="NM_003409.4"/>
</dbReference>
<dbReference type="RefSeq" id="XP_024307029.1">
    <property type="nucleotide sequence ID" value="XM_024451261.2"/>
</dbReference>
<dbReference type="RefSeq" id="XP_024307030.1">
    <property type="nucleotide sequence ID" value="XM_024451262.2"/>
</dbReference>
<dbReference type="RefSeq" id="XP_024307031.1">
    <property type="nucleotide sequence ID" value="XM_024451263.2"/>
</dbReference>
<dbReference type="RefSeq" id="XP_024307032.1">
    <property type="nucleotide sequence ID" value="XM_024451264.2"/>
</dbReference>
<dbReference type="RefSeq" id="XP_024307033.1">
    <property type="nucleotide sequence ID" value="XM_024451265.2"/>
</dbReference>
<dbReference type="RefSeq" id="XP_024307034.1">
    <property type="nucleotide sequence ID" value="XM_024451266.2"/>
</dbReference>
<dbReference type="RefSeq" id="XP_054175062.1">
    <property type="nucleotide sequence ID" value="XM_054319087.1"/>
</dbReference>
<dbReference type="RefSeq" id="XP_054175063.1">
    <property type="nucleotide sequence ID" value="XM_054319088.1"/>
</dbReference>
<dbReference type="RefSeq" id="XP_054175064.1">
    <property type="nucleotide sequence ID" value="XM_054319089.1"/>
</dbReference>
<dbReference type="RefSeq" id="XP_054175065.1">
    <property type="nucleotide sequence ID" value="XM_054319090.1"/>
</dbReference>
<dbReference type="RefSeq" id="XP_054175066.1">
    <property type="nucleotide sequence ID" value="XM_054319091.1"/>
</dbReference>
<dbReference type="RefSeq" id="XP_054175067.1">
    <property type="nucleotide sequence ID" value="XM_054319092.1"/>
</dbReference>
<dbReference type="SMR" id="O43829"/>
<dbReference type="BioGRID" id="113373">
    <property type="interactions" value="82"/>
</dbReference>
<dbReference type="FunCoup" id="O43829">
    <property type="interactions" value="3852"/>
</dbReference>
<dbReference type="IntAct" id="O43829">
    <property type="interactions" value="74"/>
</dbReference>
<dbReference type="STRING" id="9606.ENSP00000349503"/>
<dbReference type="ChEMBL" id="CHEMBL5069377"/>
<dbReference type="iPTMnet" id="O43829"/>
<dbReference type="PhosphoSitePlus" id="O43829"/>
<dbReference type="BioMuta" id="ZBTB14"/>
<dbReference type="jPOST" id="O43829"/>
<dbReference type="MassIVE" id="O43829"/>
<dbReference type="PaxDb" id="9606-ENSP00000349503"/>
<dbReference type="PeptideAtlas" id="O43829"/>
<dbReference type="ProteomicsDB" id="49195"/>
<dbReference type="Pumba" id="O43829"/>
<dbReference type="Antibodypedia" id="21919">
    <property type="antibodies" value="60 antibodies from 18 providers"/>
</dbReference>
<dbReference type="DNASU" id="7541"/>
<dbReference type="Ensembl" id="ENST00000357006.8">
    <property type="protein sequence ID" value="ENSP00000349503.4"/>
    <property type="gene ID" value="ENSG00000198081.11"/>
</dbReference>
<dbReference type="Ensembl" id="ENST00000400143.7">
    <property type="protein sequence ID" value="ENSP00000383009.3"/>
    <property type="gene ID" value="ENSG00000198081.11"/>
</dbReference>
<dbReference type="Ensembl" id="ENST00000614697.4">
    <property type="protein sequence ID" value="ENSP00000484129.1"/>
    <property type="gene ID" value="ENSG00000198081.11"/>
</dbReference>
<dbReference type="Ensembl" id="ENST00000615385.4">
    <property type="protein sequence ID" value="ENSP00000478971.1"/>
    <property type="gene ID" value="ENSG00000198081.11"/>
</dbReference>
<dbReference type="Ensembl" id="ENST00000651870.1">
    <property type="protein sequence ID" value="ENSP00000499212.1"/>
    <property type="gene ID" value="ENSG00000198081.11"/>
</dbReference>
<dbReference type="GeneID" id="7541"/>
<dbReference type="KEGG" id="hsa:7541"/>
<dbReference type="MANE-Select" id="ENST00000651870.1">
    <property type="protein sequence ID" value="ENSP00000499212.1"/>
    <property type="RefSeq nucleotide sequence ID" value="NM_001243702.2"/>
    <property type="RefSeq protein sequence ID" value="NP_001230631.1"/>
</dbReference>
<dbReference type="UCSC" id="uc002kmq.4">
    <property type="organism name" value="human"/>
</dbReference>
<dbReference type="AGR" id="HGNC:12860"/>
<dbReference type="CTD" id="7541"/>
<dbReference type="DisGeNET" id="7541"/>
<dbReference type="GeneCards" id="ZBTB14"/>
<dbReference type="HGNC" id="HGNC:12860">
    <property type="gene designation" value="ZBTB14"/>
</dbReference>
<dbReference type="HPA" id="ENSG00000198081">
    <property type="expression patterns" value="Low tissue specificity"/>
</dbReference>
<dbReference type="MIM" id="602126">
    <property type="type" value="gene"/>
</dbReference>
<dbReference type="neXtProt" id="NX_O43829"/>
<dbReference type="OpenTargets" id="ENSG00000198081"/>
<dbReference type="PharmGKB" id="PA37449"/>
<dbReference type="VEuPathDB" id="HostDB:ENSG00000198081"/>
<dbReference type="eggNOG" id="KOG1721">
    <property type="taxonomic scope" value="Eukaryota"/>
</dbReference>
<dbReference type="GeneTree" id="ENSGT00940000158052"/>
<dbReference type="HOGENOM" id="CLU_697455_0_0_1"/>
<dbReference type="InParanoid" id="O43829"/>
<dbReference type="OMA" id="CIGCDYK"/>
<dbReference type="OrthoDB" id="6425912at2759"/>
<dbReference type="PAN-GO" id="O43829">
    <property type="GO annotations" value="5 GO annotations based on evolutionary models"/>
</dbReference>
<dbReference type="PhylomeDB" id="O43829"/>
<dbReference type="TreeFam" id="TF333100"/>
<dbReference type="PathwayCommons" id="O43829"/>
<dbReference type="SignaLink" id="O43829"/>
<dbReference type="SIGNOR" id="O43829"/>
<dbReference type="BioGRID-ORCS" id="7541">
    <property type="hits" value="32 hits in 1218 CRISPR screens"/>
</dbReference>
<dbReference type="ChiTaRS" id="ZBTB14">
    <property type="organism name" value="human"/>
</dbReference>
<dbReference type="GeneWiki" id="ZFP161"/>
<dbReference type="GenomeRNAi" id="7541"/>
<dbReference type="Pharos" id="O43829">
    <property type="development level" value="Tbio"/>
</dbReference>
<dbReference type="PRO" id="PR:O43829"/>
<dbReference type="Proteomes" id="UP000005640">
    <property type="component" value="Chromosome 18"/>
</dbReference>
<dbReference type="RNAct" id="O43829">
    <property type="molecule type" value="protein"/>
</dbReference>
<dbReference type="Bgee" id="ENSG00000198081">
    <property type="expression patterns" value="Expressed in calcaneal tendon and 163 other cell types or tissues"/>
</dbReference>
<dbReference type="ExpressionAtlas" id="O43829">
    <property type="expression patterns" value="baseline and differential"/>
</dbReference>
<dbReference type="GO" id="GO:0016235">
    <property type="term" value="C:aggresome"/>
    <property type="evidence" value="ECO:0000314"/>
    <property type="project" value="HPA"/>
</dbReference>
<dbReference type="GO" id="GO:0005829">
    <property type="term" value="C:cytosol"/>
    <property type="evidence" value="ECO:0000314"/>
    <property type="project" value="HPA"/>
</dbReference>
<dbReference type="GO" id="GO:0005730">
    <property type="term" value="C:nucleolus"/>
    <property type="evidence" value="ECO:0000314"/>
    <property type="project" value="HPA"/>
</dbReference>
<dbReference type="GO" id="GO:0005654">
    <property type="term" value="C:nucleoplasm"/>
    <property type="evidence" value="ECO:0000314"/>
    <property type="project" value="HPA"/>
</dbReference>
<dbReference type="GO" id="GO:0005634">
    <property type="term" value="C:nucleus"/>
    <property type="evidence" value="ECO:0000314"/>
    <property type="project" value="UniProtKB"/>
</dbReference>
<dbReference type="GO" id="GO:0003700">
    <property type="term" value="F:DNA-binding transcription factor activity"/>
    <property type="evidence" value="ECO:0000314"/>
    <property type="project" value="UniProtKB"/>
</dbReference>
<dbReference type="GO" id="GO:0001227">
    <property type="term" value="F:DNA-binding transcription repressor activity, RNA polymerase II-specific"/>
    <property type="evidence" value="ECO:0000318"/>
    <property type="project" value="GO_Central"/>
</dbReference>
<dbReference type="GO" id="GO:0000978">
    <property type="term" value="F:RNA polymerase II cis-regulatory region sequence-specific DNA binding"/>
    <property type="evidence" value="ECO:0000318"/>
    <property type="project" value="GO_Central"/>
</dbReference>
<dbReference type="GO" id="GO:0043565">
    <property type="term" value="F:sequence-specific DNA binding"/>
    <property type="evidence" value="ECO:0000314"/>
    <property type="project" value="UniProtKB"/>
</dbReference>
<dbReference type="GO" id="GO:1990837">
    <property type="term" value="F:sequence-specific double-stranded DNA binding"/>
    <property type="evidence" value="ECO:0000314"/>
    <property type="project" value="ARUK-UCL"/>
</dbReference>
<dbReference type="GO" id="GO:0000976">
    <property type="term" value="F:transcription cis-regulatory region binding"/>
    <property type="evidence" value="ECO:0000314"/>
    <property type="project" value="UniProtKB"/>
</dbReference>
<dbReference type="GO" id="GO:0008270">
    <property type="term" value="F:zinc ion binding"/>
    <property type="evidence" value="ECO:0007669"/>
    <property type="project" value="UniProtKB-KW"/>
</dbReference>
<dbReference type="GO" id="GO:0003279">
    <property type="term" value="P:cardiac septum development"/>
    <property type="evidence" value="ECO:0007669"/>
    <property type="project" value="Ensembl"/>
</dbReference>
<dbReference type="GO" id="GO:0060976">
    <property type="term" value="P:coronary vasculature development"/>
    <property type="evidence" value="ECO:0007669"/>
    <property type="project" value="Ensembl"/>
</dbReference>
<dbReference type="GO" id="GO:0003170">
    <property type="term" value="P:heart valve development"/>
    <property type="evidence" value="ECO:0007669"/>
    <property type="project" value="Ensembl"/>
</dbReference>
<dbReference type="GO" id="GO:0001822">
    <property type="term" value="P:kidney development"/>
    <property type="evidence" value="ECO:0007669"/>
    <property type="project" value="Ensembl"/>
</dbReference>
<dbReference type="GO" id="GO:0045892">
    <property type="term" value="P:negative regulation of DNA-templated transcription"/>
    <property type="evidence" value="ECO:0000315"/>
    <property type="project" value="UniProtKB"/>
</dbReference>
<dbReference type="GO" id="GO:0000122">
    <property type="term" value="P:negative regulation of transcription by RNA polymerase II"/>
    <property type="evidence" value="ECO:0000318"/>
    <property type="project" value="GO_Central"/>
</dbReference>
<dbReference type="GO" id="GO:0001817">
    <property type="term" value="P:regulation of cytokine production"/>
    <property type="evidence" value="ECO:0000318"/>
    <property type="project" value="GO_Central"/>
</dbReference>
<dbReference type="GO" id="GO:0002682">
    <property type="term" value="P:regulation of immune system process"/>
    <property type="evidence" value="ECO:0000318"/>
    <property type="project" value="GO_Central"/>
</dbReference>
<dbReference type="CDD" id="cd18204">
    <property type="entry name" value="BTB_POZ_ZBTB14"/>
    <property type="match status" value="1"/>
</dbReference>
<dbReference type="FunFam" id="3.30.160.60:FF:000147">
    <property type="entry name" value="POZ-, AT hook-, and zinc finger-containing protein 1"/>
    <property type="match status" value="1"/>
</dbReference>
<dbReference type="FunFam" id="3.30.160.60:FF:000316">
    <property type="entry name" value="Zinc finger and BTB domain-containing 14"/>
    <property type="match status" value="1"/>
</dbReference>
<dbReference type="FunFam" id="3.30.160.60:FF:000762">
    <property type="entry name" value="Zinc finger and BTB domain-containing 14"/>
    <property type="match status" value="1"/>
</dbReference>
<dbReference type="FunFam" id="3.30.160.60:FF:000766">
    <property type="entry name" value="Zinc finger and BTB domain-containing 14"/>
    <property type="match status" value="1"/>
</dbReference>
<dbReference type="FunFam" id="3.30.710.10:FF:000054">
    <property type="entry name" value="Zinc finger and BTB domain-containing protein 14"/>
    <property type="match status" value="1"/>
</dbReference>
<dbReference type="FunFam" id="3.30.160.60:FF:000145">
    <property type="entry name" value="Zinc finger protein 574"/>
    <property type="match status" value="1"/>
</dbReference>
<dbReference type="Gene3D" id="3.30.160.60">
    <property type="entry name" value="Classic Zinc Finger"/>
    <property type="match status" value="5"/>
</dbReference>
<dbReference type="Gene3D" id="3.30.710.10">
    <property type="entry name" value="Potassium Channel Kv1.1, Chain A"/>
    <property type="match status" value="1"/>
</dbReference>
<dbReference type="InterPro" id="IPR000210">
    <property type="entry name" value="BTB/POZ_dom"/>
</dbReference>
<dbReference type="InterPro" id="IPR011333">
    <property type="entry name" value="SKP1/BTB/POZ_sf"/>
</dbReference>
<dbReference type="InterPro" id="IPR036236">
    <property type="entry name" value="Znf_C2H2_sf"/>
</dbReference>
<dbReference type="InterPro" id="IPR013087">
    <property type="entry name" value="Znf_C2H2_type"/>
</dbReference>
<dbReference type="InterPro" id="IPR050457">
    <property type="entry name" value="ZnFinger_BTB_dom_contain"/>
</dbReference>
<dbReference type="PANTHER" id="PTHR46105">
    <property type="entry name" value="AGAP004733-PA"/>
    <property type="match status" value="1"/>
</dbReference>
<dbReference type="PANTHER" id="PTHR46105:SF5">
    <property type="entry name" value="ZINC FINGER AND BTB DOMAIN-CONTAINING PROTEIN 44 ISOFORM X1"/>
    <property type="match status" value="1"/>
</dbReference>
<dbReference type="Pfam" id="PF00651">
    <property type="entry name" value="BTB"/>
    <property type="match status" value="1"/>
</dbReference>
<dbReference type="Pfam" id="PF00096">
    <property type="entry name" value="zf-C2H2"/>
    <property type="match status" value="5"/>
</dbReference>
<dbReference type="SMART" id="SM00225">
    <property type="entry name" value="BTB"/>
    <property type="match status" value="1"/>
</dbReference>
<dbReference type="SMART" id="SM00355">
    <property type="entry name" value="ZnF_C2H2"/>
    <property type="match status" value="5"/>
</dbReference>
<dbReference type="SUPFAM" id="SSF57667">
    <property type="entry name" value="beta-beta-alpha zinc fingers"/>
    <property type="match status" value="3"/>
</dbReference>
<dbReference type="SUPFAM" id="SSF54695">
    <property type="entry name" value="POZ domain"/>
    <property type="match status" value="1"/>
</dbReference>
<dbReference type="PROSITE" id="PS50097">
    <property type="entry name" value="BTB"/>
    <property type="match status" value="1"/>
</dbReference>
<dbReference type="PROSITE" id="PS00028">
    <property type="entry name" value="ZINC_FINGER_C2H2_1"/>
    <property type="match status" value="5"/>
</dbReference>
<dbReference type="PROSITE" id="PS50157">
    <property type="entry name" value="ZINC_FINGER_C2H2_2"/>
    <property type="match status" value="5"/>
</dbReference>
<gene>
    <name type="primary">ZBTB14</name>
    <name type="synonym">ZFP161</name>
    <name type="synonym">ZNF478</name>
</gene>
<evidence type="ECO:0000255" key="1"/>
<evidence type="ECO:0000255" key="2">
    <source>
        <dbReference type="PROSITE-ProRule" id="PRU00037"/>
    </source>
</evidence>
<evidence type="ECO:0000255" key="3">
    <source>
        <dbReference type="PROSITE-ProRule" id="PRU00042"/>
    </source>
</evidence>
<evidence type="ECO:0000256" key="4">
    <source>
        <dbReference type="SAM" id="MobiDB-lite"/>
    </source>
</evidence>
<evidence type="ECO:0000269" key="5">
    <source>
    </source>
</evidence>
<evidence type="ECO:0000269" key="6">
    <source>
    </source>
</evidence>
<evidence type="ECO:0000305" key="7"/>
<evidence type="ECO:0007744" key="8">
    <source>
    </source>
</evidence>
<name>ZBT14_HUMAN</name>
<organism>
    <name type="scientific">Homo sapiens</name>
    <name type="common">Human</name>
    <dbReference type="NCBI Taxonomy" id="9606"/>
    <lineage>
        <taxon>Eukaryota</taxon>
        <taxon>Metazoa</taxon>
        <taxon>Chordata</taxon>
        <taxon>Craniata</taxon>
        <taxon>Vertebrata</taxon>
        <taxon>Euteleostomi</taxon>
        <taxon>Mammalia</taxon>
        <taxon>Eutheria</taxon>
        <taxon>Euarchontoglires</taxon>
        <taxon>Primates</taxon>
        <taxon>Haplorrhini</taxon>
        <taxon>Catarrhini</taxon>
        <taxon>Hominidae</taxon>
        <taxon>Homo</taxon>
    </lineage>
</organism>
<sequence length="449" mass="50956">MEFFISMSETIKYNDDDHKTLFLKTLNEQRLEGEFCDIAIVVEDVKFRAHRCVLAACSTYFKKLFKKLEVDSSSVIEIDFLRSDIFEEVLNYMYTAKISVKKEDVNLMMSSGQILGIRFLDKLCSQKRDVSSPDENNGQSKSKYCLKINRPIGDAADTQDDDVEEIGDQDDSPSDDTVEGTPPSQEDGKSPTTTLRVQEAILKELGSEEVRKVNCYGQEVESMETPESKDLGSQTPQALTFNDGMSEVKDEQTPGWTTAASDMKFEYLLYGHHREQIACQACGKTFSDEGRLRKHEKLHTADRPFVCEMCTKGFTTQAHLKEHLKIHTGYKPYSCEVCGKSFIRAPDLKKHERVHSNERPFACHMCDKAFKHKSHLKDHERRHRGEKPFVCGSCTKAFAKASDLKRHENNMHSERKQVTPSAIQSETEQLQAAAMAAEAEQQLETIACS</sequence>
<feature type="chain" id="PRO_0000047317" description="Zinc finger and BTB domain-containing protein 14">
    <location>
        <begin position="1"/>
        <end position="449"/>
    </location>
</feature>
<feature type="domain" description="BTB" evidence="2">
    <location>
        <begin position="36"/>
        <end position="102"/>
    </location>
</feature>
<feature type="zinc finger region" description="C2H2-type 1" evidence="3">
    <location>
        <begin position="277"/>
        <end position="304"/>
    </location>
</feature>
<feature type="zinc finger region" description="C2H2-type 2" evidence="3">
    <location>
        <begin position="305"/>
        <end position="332"/>
    </location>
</feature>
<feature type="zinc finger region" description="C2H2-type 3" evidence="3">
    <location>
        <begin position="333"/>
        <end position="360"/>
    </location>
</feature>
<feature type="zinc finger region" description="C2H2-type 4" evidence="3">
    <location>
        <begin position="361"/>
        <end position="388"/>
    </location>
</feature>
<feature type="zinc finger region" description="C2H2-type 5" evidence="3">
    <location>
        <begin position="389"/>
        <end position="417"/>
    </location>
</feature>
<feature type="region of interest" description="Disordered" evidence="4">
    <location>
        <begin position="153"/>
        <end position="194"/>
    </location>
</feature>
<feature type="short sequence motif" description="Nuclear localization signal" evidence="1">
    <location>
        <begin position="50"/>
        <end position="66"/>
    </location>
</feature>
<feature type="compositionally biased region" description="Acidic residues" evidence="4">
    <location>
        <begin position="157"/>
        <end position="178"/>
    </location>
</feature>
<feature type="cross-link" description="Glycyl lysine isopeptide (Lys-Gly) (interchain with G-Cter in SUMO2)" evidence="8">
    <location>
        <position position="46"/>
    </location>
</feature>
<feature type="cross-link" description="Glycyl lysine isopeptide (Lys-Gly) (interchain with G-Cter in SUMO2)" evidence="8">
    <location>
        <position position="203"/>
    </location>
</feature>
<feature type="cross-link" description="Glycyl lysine isopeptide (Lys-Gly) (interchain with G-Cter in SUMO2)" evidence="8">
    <location>
        <position position="249"/>
    </location>
</feature>
<feature type="sequence variant" id="VAR_027810" description="In dbSNP:rs7235740.">
    <original>E</original>
    <variation>G</variation>
    <location>
        <position position="77"/>
    </location>
</feature>
<feature type="sequence variant" id="VAR_027811" description="In dbSNP:rs7235420.">
    <original>Q</original>
    <variation>R</variation>
    <location>
        <position position="139"/>
    </location>
</feature>
<feature type="sequence conflict" description="In Ref. 1; CAA73258." evidence="7" ref="1">
    <original>I</original>
    <variation>V</variation>
    <location>
        <position position="5"/>
    </location>
</feature>
<feature type="sequence conflict" description="In Ref. 1; CAA73258." evidence="7" ref="1">
    <original>DD</original>
    <variation>GC</variation>
    <location>
        <begin position="160"/>
        <end position="161"/>
    </location>
</feature>
<reference key="1">
    <citation type="journal article" date="1997" name="Genomics">
        <title>The human gene ZFP161 on 18p11.21-pter encodes a putative c-myc repressor and is homologous to murine Zfp161 (Chr 17) and Zfp161-rs1 (X Chr).</title>
        <authorList>
            <person name="Sobek-Klocke I."/>
            <person name="Disque-Kochem C."/>
            <person name="Ronsiek M."/>
            <person name="Klocke R."/>
            <person name="Jockusch H."/>
            <person name="Breuning A."/>
            <person name="Ponstingl H."/>
            <person name="Rojas K."/>
            <person name="Overhauser J."/>
            <person name="Eichenlaub-Ritter U."/>
        </authorList>
    </citation>
    <scope>NUCLEOTIDE SEQUENCE [MRNA]</scope>
    <source>
        <tissue>Nasal polyp</tissue>
    </source>
</reference>
<reference key="2">
    <citation type="journal article" date="1997" name="Genomics">
        <authorList>
            <person name="Sobek-Klocke I."/>
            <person name="Disque-Kochem C."/>
            <person name="Ronsiek M."/>
            <person name="Klocke R."/>
            <person name="Jockusch H."/>
            <person name="Breuning A."/>
            <person name="Ponstingl H."/>
            <person name="Rojas K."/>
            <person name="Overhauser J."/>
            <person name="Eichenlaub-Ritter U."/>
        </authorList>
    </citation>
    <scope>ERRATUM OF PUBMED:9244432</scope>
</reference>
<reference key="3">
    <citation type="journal article" date="1997" name="Biochim. Biophys. Acta">
        <title>Expression cloning and intracellular localization of a human ZF5 homologue.</title>
        <authorList>
            <person name="Sugiura K."/>
            <person name="Muro Y."/>
            <person name="Nagai Y."/>
            <person name="Kamimoto T."/>
            <person name="Wakabayashi T."/>
            <person name="Ohashi M."/>
            <person name="Hagiwara M."/>
        </authorList>
    </citation>
    <scope>NUCLEOTIDE SEQUENCE [MRNA]</scope>
    <source>
        <tissue>Cervix carcinoma</tissue>
    </source>
</reference>
<reference key="4">
    <citation type="journal article" date="2007" name="FEBS J.">
        <title>Novel repressor of the human FMR1 gene - identification of p56 human (GCC)(n)-binding protein as a Kruppel-like transcription factor ZF5.</title>
        <authorList>
            <person name="Orlov S.V."/>
            <person name="Kuteykin-Teplyakov K.B."/>
            <person name="Ignatovich I.A."/>
            <person name="Dizhe E.B."/>
            <person name="Mirgorodskaya O.A."/>
            <person name="Grishin A.V."/>
            <person name="Guzhova O.B."/>
            <person name="Prokhortchouk E.B."/>
            <person name="Guliy P.V."/>
            <person name="Perevozchikov A.P."/>
        </authorList>
    </citation>
    <scope>NUCLEOTIDE SEQUENCE [MRNA]</scope>
    <scope>IDENTIFICATION BY MASS SPECTROMETRY</scope>
    <scope>FUNCTION</scope>
    <source>
        <tissue>Hepatoma</tissue>
    </source>
</reference>
<reference key="5">
    <citation type="journal article" date="2004" name="Genome Res.">
        <title>The status, quality, and expansion of the NIH full-length cDNA project: the Mammalian Gene Collection (MGC).</title>
        <authorList>
            <consortium name="The MGC Project Team"/>
        </authorList>
    </citation>
    <scope>NUCLEOTIDE SEQUENCE [LARGE SCALE MRNA]</scope>
</reference>
<reference key="6">
    <citation type="journal article" date="2004" name="Biochem. Biophys. Res. Commun.">
        <title>Human zinc finger protein 161, a novel transcriptional activator of the dopamine transporter.</title>
        <authorList>
            <person name="Lee K.H."/>
            <person name="Kwak Y.D."/>
            <person name="Kim D.H."/>
            <person name="Chang M.Y."/>
            <person name="Lee Y.S."/>
            <person name="Lee Y.S."/>
        </authorList>
    </citation>
    <scope>DOPAMINE TRANSPORTER ACTIVATION</scope>
</reference>
<reference key="7">
    <citation type="journal article" date="2005" name="Biochem. Biophys. Res. Commun.">
        <title>Novel human BTB/POZ domain-containing zinc finger protein ZNF295 is directly associated with ZFP161.</title>
        <authorList>
            <person name="Wang J."/>
            <person name="Kudoh J."/>
            <person name="Takayanagi A."/>
            <person name="Shimizu N."/>
        </authorList>
    </citation>
    <scope>INTERACTION WITH ZBTB21</scope>
    <scope>SUBCELLULAR LOCATION</scope>
    <source>
        <tissue>Fetal kidney</tissue>
        <tissue>Testis</tissue>
    </source>
</reference>
<reference key="8">
    <citation type="journal article" date="2017" name="Nat. Struct. Mol. Biol.">
        <title>Site-specific mapping of the human SUMO proteome reveals co-modification with phosphorylation.</title>
        <authorList>
            <person name="Hendriks I.A."/>
            <person name="Lyon D."/>
            <person name="Young C."/>
            <person name="Jensen L.J."/>
            <person name="Vertegaal A.C."/>
            <person name="Nielsen M.L."/>
        </authorList>
    </citation>
    <scope>SUMOYLATION [LARGE SCALE ANALYSIS] AT LYS-46; LYS-203 AND LYS-249</scope>
    <scope>IDENTIFICATION BY MASS SPECTROMETRY [LARGE SCALE ANALYSIS]</scope>
</reference>
<proteinExistence type="evidence at protein level"/>
<comment type="function">
    <text evidence="6">Transcriptional activator of the dopamine transporter (DAT), binding it's promoter at the consensus sequence 5'-CCTGCACAGTTCACGGA-3'. Binds to 5'-d(GCC)(n)-3' trinucleotide repeats in promoter regions and acts as a repressor of the FMR1 gene. Transcriptional repressor of MYC and thymidine kinase promoters.</text>
</comment>
<comment type="subunit">
    <text evidence="5">Interacts with ZBTB21.</text>
</comment>
<comment type="interaction">
    <interactant intactId="EBI-10176632">
        <id>O43829</id>
    </interactant>
    <interactant intactId="EBI-541426">
        <id>Q9BXS5</id>
        <label>AP1M1</label>
    </interactant>
    <organismsDiffer>false</organismsDiffer>
    <experiments>6</experiments>
</comment>
<comment type="interaction">
    <interactant intactId="EBI-10176632">
        <id>O43829</id>
    </interactant>
    <interactant intactId="EBI-355815">
        <id>P48047</id>
        <label>ATP5PO</label>
    </interactant>
    <organismsDiffer>false</organismsDiffer>
    <experiments>3</experiments>
</comment>
<comment type="interaction">
    <interactant intactId="EBI-10176632">
        <id>O43829</id>
    </interactant>
    <interactant intactId="EBI-10321972">
        <id>Q9UIF8-2</id>
        <label>BAZ2B</label>
    </interactant>
    <organismsDiffer>false</organismsDiffer>
    <experiments>3</experiments>
</comment>
<comment type="interaction">
    <interactant intactId="EBI-10176632">
        <id>O43829</id>
    </interactant>
    <interactant intactId="EBI-358049">
        <id>Q13895</id>
        <label>BYSL</label>
    </interactant>
    <organismsDiffer>false</organismsDiffer>
    <experiments>8</experiments>
</comment>
<comment type="interaction">
    <interactant intactId="EBI-10176632">
        <id>O43829</id>
    </interactant>
    <interactant intactId="EBI-11603468">
        <id>Q2NKX9</id>
        <label>C2orf68</label>
    </interactant>
    <organismsDiffer>false</organismsDiffer>
    <experiments>3</experiments>
</comment>
<comment type="interaction">
    <interactant intactId="EBI-10176632">
        <id>O43829</id>
    </interactant>
    <interactant intactId="EBI-7183095">
        <id>Q9Y6Q1</id>
        <label>CAPN6</label>
    </interactant>
    <organismsDiffer>false</organismsDiffer>
    <experiments>3</experiments>
</comment>
<comment type="interaction">
    <interactant intactId="EBI-10176632">
        <id>O43829</id>
    </interactant>
    <interactant intactId="EBI-718729">
        <id>P55212</id>
        <label>CASP6</label>
    </interactant>
    <organismsDiffer>false</organismsDiffer>
    <experiments>3</experiments>
</comment>
<comment type="interaction">
    <interactant intactId="EBI-10176632">
        <id>O43829</id>
    </interactant>
    <interactant intactId="EBI-712912">
        <id>Q9HC52</id>
        <label>CBX8</label>
    </interactant>
    <organismsDiffer>false</organismsDiffer>
    <experiments>6</experiments>
</comment>
<comment type="interaction">
    <interactant intactId="EBI-10176632">
        <id>O43829</id>
    </interactant>
    <interactant intactId="EBI-726261">
        <id>Q00536</id>
        <label>CDK16</label>
    </interactant>
    <organismsDiffer>false</organismsDiffer>
    <experiments>3</experiments>
</comment>
<comment type="interaction">
    <interactant intactId="EBI-10176632">
        <id>O43829</id>
    </interactant>
    <interactant intactId="EBI-12401765">
        <id>Q00536-3</id>
        <label>CDK16</label>
    </interactant>
    <organismsDiffer>false</organismsDiffer>
    <experiments>3</experiments>
</comment>
<comment type="interaction">
    <interactant intactId="EBI-10176632">
        <id>O43829</id>
    </interactant>
    <interactant intactId="EBI-3919850">
        <id>Q8IVW4</id>
        <label>CDKL3</label>
    </interactant>
    <organismsDiffer>false</organismsDiffer>
    <experiments>3</experiments>
</comment>
<comment type="interaction">
    <interactant intactId="EBI-10176632">
        <id>O43829</id>
    </interactant>
    <interactant intactId="EBI-741885">
        <id>Q96LK0</id>
        <label>CEP19</label>
    </interactant>
    <organismsDiffer>false</organismsDiffer>
    <experiments>6</experiments>
</comment>
<comment type="interaction">
    <interactant intactId="EBI-10176632">
        <id>O43829</id>
    </interactant>
    <interactant intactId="EBI-446479">
        <id>P99999</id>
        <label>CYCS</label>
    </interactant>
    <organismsDiffer>false</organismsDiffer>
    <experiments>3</experiments>
</comment>
<comment type="interaction">
    <interactant intactId="EBI-10176632">
        <id>O43829</id>
    </interactant>
    <interactant intactId="EBI-351257">
        <id>P26196</id>
        <label>DDX6</label>
    </interactant>
    <organismsDiffer>false</organismsDiffer>
    <experiments>3</experiments>
</comment>
<comment type="interaction">
    <interactant intactId="EBI-10176632">
        <id>O43829</id>
    </interactant>
    <interactant intactId="EBI-769261">
        <id>Q96JC9</id>
        <label>EAF1</label>
    </interactant>
    <organismsDiffer>false</organismsDiffer>
    <experiments>3</experiments>
</comment>
<comment type="interaction">
    <interactant intactId="EBI-10176632">
        <id>O43829</id>
    </interactant>
    <interactant intactId="EBI-750700">
        <id>Q8N9N8</id>
        <label>EIF1AD</label>
    </interactant>
    <organismsDiffer>false</organismsDiffer>
    <experiments>3</experiments>
</comment>
<comment type="interaction">
    <interactant intactId="EBI-10176632">
        <id>O43829</id>
    </interactant>
    <interactant intactId="EBI-744099">
        <id>Q9H0I2</id>
        <label>ENKD1</label>
    </interactant>
    <organismsDiffer>false</organismsDiffer>
    <experiments>3</experiments>
</comment>
<comment type="interaction">
    <interactant intactId="EBI-10176632">
        <id>O43829</id>
    </interactant>
    <interactant intactId="EBI-6255981">
        <id>Q7L775</id>
        <label>EPM2AIP1</label>
    </interactant>
    <organismsDiffer>false</organismsDiffer>
    <experiments>6</experiments>
</comment>
<comment type="interaction">
    <interactant intactId="EBI-10176632">
        <id>O43829</id>
    </interactant>
    <interactant intactId="EBI-719941">
        <id>Q3B820</id>
        <label>FAM161A</label>
    </interactant>
    <organismsDiffer>false</organismsDiffer>
    <experiments>3</experiments>
</comment>
<comment type="interaction">
    <interactant intactId="EBI-10176632">
        <id>O43829</id>
    </interactant>
    <interactant intactId="EBI-6658203">
        <id>Q86YD7</id>
        <label>FAM90A1</label>
    </interactant>
    <organismsDiffer>false</organismsDiffer>
    <experiments>3</experiments>
</comment>
<comment type="interaction">
    <interactant intactId="EBI-10176632">
        <id>O43829</id>
    </interactant>
    <interactant intactId="EBI-348399">
        <id>P22607</id>
        <label>FGFR3</label>
    </interactant>
    <organismsDiffer>false</organismsDiffer>
    <experiments>3</experiments>
</comment>
<comment type="interaction">
    <interactant intactId="EBI-10176632">
        <id>O43829</id>
    </interactant>
    <interactant intactId="EBI-739467">
        <id>Q9H8Y8</id>
        <label>GORASP2</label>
    </interactant>
    <organismsDiffer>false</organismsDiffer>
    <experiments>4</experiments>
</comment>
<comment type="interaction">
    <interactant intactId="EBI-10176632">
        <id>O43829</id>
    </interactant>
    <interactant intactId="EBI-8285963">
        <id>Q14957</id>
        <label>GRIN2C</label>
    </interactant>
    <organismsDiffer>false</organismsDiffer>
    <experiments>3</experiments>
</comment>
<comment type="interaction">
    <interactant intactId="EBI-10176632">
        <id>O43829</id>
    </interactant>
    <interactant intactId="EBI-351506">
        <id>P06396</id>
        <label>GSN</label>
    </interactant>
    <organismsDiffer>false</organismsDiffer>
    <experiments>3</experiments>
</comment>
<comment type="interaction">
    <interactant intactId="EBI-10176632">
        <id>O43829</id>
    </interactant>
    <interactant intactId="EBI-473886">
        <id>O00291</id>
        <label>HIP1</label>
    </interactant>
    <organismsDiffer>false</organismsDiffer>
    <experiments>3</experiments>
</comment>
<comment type="interaction">
    <interactant intactId="EBI-10176632">
        <id>O43829</id>
    </interactant>
    <interactant intactId="EBI-350145">
        <id>P01112</id>
        <label>HRAS</label>
    </interactant>
    <organismsDiffer>false</organismsDiffer>
    <experiments>3</experiments>
</comment>
<comment type="interaction">
    <interactant intactId="EBI-10176632">
        <id>O43829</id>
    </interactant>
    <interactant intactId="EBI-2680854">
        <id>Q68E01</id>
        <label>INTS3</label>
    </interactant>
    <organismsDiffer>false</organismsDiffer>
    <experiments>3</experiments>
</comment>
<comment type="interaction">
    <interactant intactId="EBI-10176632">
        <id>O43829</id>
    </interactant>
    <interactant intactId="EBI-399080">
        <id>Q92993</id>
        <label>KAT5</label>
    </interactant>
    <organismsDiffer>false</organismsDiffer>
    <experiments>3</experiments>
</comment>
<comment type="interaction">
    <interactant intactId="EBI-10176632">
        <id>O43829</id>
    </interactant>
    <interactant intactId="EBI-948266">
        <id>O14901</id>
        <label>KLF11</label>
    </interactant>
    <organismsDiffer>false</organismsDiffer>
    <experiments>3</experiments>
</comment>
<comment type="interaction">
    <interactant intactId="EBI-10176632">
        <id>O43829</id>
    </interactant>
    <interactant intactId="EBI-473196">
        <id>Q5T3J3</id>
        <label>LRIF1</label>
    </interactant>
    <organismsDiffer>false</organismsDiffer>
    <experiments>3</experiments>
</comment>
<comment type="interaction">
    <interactant intactId="EBI-10176632">
        <id>O43829</id>
    </interactant>
    <interactant intactId="EBI-712181">
        <id>Q15013</id>
        <label>MAD2L1BP</label>
    </interactant>
    <organismsDiffer>false</organismsDiffer>
    <experiments>6</experiments>
</comment>
<comment type="interaction">
    <interactant intactId="EBI-10176632">
        <id>O43829</id>
    </interactant>
    <interactant intactId="EBI-1048159">
        <id>P55081</id>
        <label>MFAP1</label>
    </interactant>
    <organismsDiffer>false</organismsDiffer>
    <experiments>3</experiments>
</comment>
<comment type="interaction">
    <interactant intactId="EBI-10176632">
        <id>O43829</id>
    </interactant>
    <interactant intactId="EBI-399257">
        <id>Q15014</id>
        <label>MORF4L2</label>
    </interactant>
    <organismsDiffer>false</organismsDiffer>
    <experiments>3</experiments>
</comment>
<comment type="interaction">
    <interactant intactId="EBI-10176632">
        <id>O43829</id>
    </interactant>
    <interactant intactId="EBI-5453723">
        <id>Q9Y3B7</id>
        <label>MRPL11</label>
    </interactant>
    <organismsDiffer>false</organismsDiffer>
    <experiments>3</experiments>
</comment>
<comment type="interaction">
    <interactant intactId="EBI-10176632">
        <id>O43829</id>
    </interactant>
    <interactant intactId="EBI-747693">
        <id>P41227</id>
        <label>NAA10</label>
    </interactant>
    <organismsDiffer>false</organismsDiffer>
    <experiments>6</experiments>
</comment>
<comment type="interaction">
    <interactant intactId="EBI-10176632">
        <id>O43829</id>
    </interactant>
    <interactant intactId="EBI-2585120">
        <id>Q9BSU3</id>
        <label>NAA11</label>
    </interactant>
    <organismsDiffer>false</organismsDiffer>
    <experiments>3</experiments>
</comment>
<comment type="interaction">
    <interactant intactId="EBI-10176632">
        <id>O43829</id>
    </interactant>
    <interactant intactId="EBI-748974">
        <id>Q96CV9</id>
        <label>OPTN</label>
    </interactant>
    <organismsDiffer>false</organismsDiffer>
    <experiments>3</experiments>
</comment>
<comment type="interaction">
    <interactant intactId="EBI-10176632">
        <id>O43829</id>
    </interactant>
    <interactant intactId="EBI-10296950">
        <id>Q9BRL4</id>
        <label>PCTK1</label>
    </interactant>
    <organismsDiffer>false</organismsDiffer>
    <experiments>3</experiments>
</comment>
<comment type="interaction">
    <interactant intactId="EBI-10176632">
        <id>O43829</id>
    </interactant>
    <interactant intactId="EBI-714158">
        <id>Q13526</id>
        <label>PIN1</label>
    </interactant>
    <organismsDiffer>false</organismsDiffer>
    <experiments>3</experiments>
</comment>
<comment type="interaction">
    <interactant intactId="EBI-10176632">
        <id>O43829</id>
    </interactant>
    <interactant intactId="EBI-1045072">
        <id>Q96T60</id>
        <label>PNKP</label>
    </interactant>
    <organismsDiffer>false</organismsDiffer>
    <experiments>6</experiments>
</comment>
<comment type="interaction">
    <interactant intactId="EBI-10176632">
        <id>O43829</id>
    </interactant>
    <interactant intactId="EBI-359527">
        <id>P62875</id>
        <label>POLR2L</label>
    </interactant>
    <organismsDiffer>false</organismsDiffer>
    <experiments>3</experiments>
</comment>
<comment type="interaction">
    <interactant intactId="EBI-10176632">
        <id>O43829</id>
    </interactant>
    <interactant intactId="EBI-5280197">
        <id>O75400-2</id>
        <label>PRPF40A</label>
    </interactant>
    <organismsDiffer>false</organismsDiffer>
    <experiments>3</experiments>
</comment>
<comment type="interaction">
    <interactant intactId="EBI-10176632">
        <id>O43829</id>
    </interactant>
    <interactant intactId="EBI-286642">
        <id>P62826</id>
        <label>RAN</label>
    </interactant>
    <organismsDiffer>false</organismsDiffer>
    <experiments>3</experiments>
</comment>
<comment type="interaction">
    <interactant intactId="EBI-10176632">
        <id>O43829</id>
    </interactant>
    <interactant intactId="EBI-12177615">
        <id>Q8N451</id>
        <label>RNASEH2B</label>
    </interactant>
    <organismsDiffer>false</organismsDiffer>
    <experiments>3</experiments>
</comment>
<comment type="interaction">
    <interactant intactId="EBI-10176632">
        <id>O43829</id>
    </interactant>
    <interactant intactId="EBI-10176640">
        <id>D3DU92</id>
        <label>rnps1</label>
    </interactant>
    <organismsDiffer>false</organismsDiffer>
    <experiments>3</experiments>
</comment>
<comment type="interaction">
    <interactant intactId="EBI-10176632">
        <id>O43829</id>
    </interactant>
    <interactant intactId="EBI-358122">
        <id>P32969</id>
        <label>RPL9P9</label>
    </interactant>
    <organismsDiffer>false</organismsDiffer>
    <experiments>3</experiments>
</comment>
<comment type="interaction">
    <interactant intactId="EBI-10176632">
        <id>O43829</id>
    </interactant>
    <interactant intactId="EBI-353054">
        <id>P62851</id>
        <label>RPS25</label>
    </interactant>
    <organismsDiffer>false</organismsDiffer>
    <experiments>3</experiments>
</comment>
<comment type="interaction">
    <interactant intactId="EBI-10176632">
        <id>O43829</id>
    </interactant>
    <interactant intactId="EBI-354360">
        <id>P62081</id>
        <label>RPS7</label>
    </interactant>
    <organismsDiffer>false</organismsDiffer>
    <experiments>4</experiments>
</comment>
<comment type="interaction">
    <interactant intactId="EBI-10176632">
        <id>O43829</id>
    </interactant>
    <interactant intactId="EBI-748391">
        <id>Q9BWG6</id>
        <label>SCNM1</label>
    </interactant>
    <organismsDiffer>false</organismsDiffer>
    <experiments>3</experiments>
</comment>
<comment type="interaction">
    <interactant intactId="EBI-10176632">
        <id>O43829</id>
    </interactant>
    <interactant intactId="EBI-727004">
        <id>O00560</id>
        <label>SDCBP</label>
    </interactant>
    <organismsDiffer>false</organismsDiffer>
    <experiments>3</experiments>
</comment>
<comment type="interaction">
    <interactant intactId="EBI-10176632">
        <id>O43829</id>
    </interactant>
    <interactant intactId="EBI-2623095">
        <id>Q9Y371</id>
        <label>SH3GLB1</label>
    </interactant>
    <organismsDiffer>false</organismsDiffer>
    <experiments>3</experiments>
</comment>
<comment type="interaction">
    <interactant intactId="EBI-10176632">
        <id>O43829</id>
    </interactant>
    <interactant intactId="EBI-1053651">
        <id>P08579</id>
        <label>SNRPB2</label>
    </interactant>
    <organismsDiffer>false</organismsDiffer>
    <experiments>6</experiments>
</comment>
<comment type="interaction">
    <interactant intactId="EBI-10176632">
        <id>O43829</id>
    </interactant>
    <interactant intactId="EBI-10238936">
        <id>Q17RD7</id>
        <label>SYT16</label>
    </interactant>
    <organismsDiffer>false</organismsDiffer>
    <experiments>3</experiments>
</comment>
<comment type="interaction">
    <interactant intactId="EBI-10176632">
        <id>O43829</id>
    </interactant>
    <interactant intactId="EBI-954696">
        <id>Q8N8B7</id>
        <label>TCEANC</label>
    </interactant>
    <organismsDiffer>false</organismsDiffer>
    <experiments>3</experiments>
</comment>
<comment type="interaction">
    <interactant intactId="EBI-10176632">
        <id>O43829</id>
    </interactant>
    <interactant intactId="EBI-11955057">
        <id>Q8N8B7-2</id>
        <label>TCEANC</label>
    </interactant>
    <organismsDiffer>false</organismsDiffer>
    <experiments>3</experiments>
</comment>
<comment type="interaction">
    <interactant intactId="EBI-10176632">
        <id>O43829</id>
    </interactant>
    <interactant intactId="EBI-8994397">
        <id>Q5T7W7</id>
        <label>TSTD2</label>
    </interactant>
    <organismsDiffer>false</organismsDiffer>
    <experiments>3</experiments>
</comment>
<comment type="interaction">
    <interactant intactId="EBI-10176632">
        <id>O43829</id>
    </interactant>
    <interactant intactId="EBI-2932492">
        <id>Q99757</id>
        <label>TXN2</label>
    </interactant>
    <organismsDiffer>false</organismsDiffer>
    <experiments>3</experiments>
</comment>
<comment type="interaction">
    <interactant intactId="EBI-10176632">
        <id>O43829</id>
    </interactant>
    <interactant intactId="EBI-741480">
        <id>Q9UMX0</id>
        <label>UBQLN1</label>
    </interactant>
    <organismsDiffer>false</organismsDiffer>
    <experiments>3</experiments>
</comment>
<comment type="interaction">
    <interactant intactId="EBI-10176632">
        <id>O43829</id>
    </interactant>
    <interactant intactId="EBI-12053451">
        <id>O14904</id>
        <label>WNT9A</label>
    </interactant>
    <organismsDiffer>false</organismsDiffer>
    <experiments>3</experiments>
</comment>
<comment type="interaction">
    <interactant intactId="EBI-10176632">
        <id>O43829</id>
    </interactant>
    <interactant intactId="EBI-597063">
        <id>Q8TBK6</id>
        <label>ZCCHC10</label>
    </interactant>
    <organismsDiffer>false</organismsDiffer>
    <experiments>3</experiments>
</comment>
<comment type="interaction">
    <interactant intactId="EBI-10176632">
        <id>O43829</id>
    </interactant>
    <interactant intactId="EBI-2682299">
        <id>Q96NC0</id>
        <label>ZMAT2</label>
    </interactant>
    <organismsDiffer>false</organismsDiffer>
    <experiments>3</experiments>
</comment>
<comment type="interaction">
    <interactant intactId="EBI-10176632">
        <id>O43829</id>
    </interactant>
    <interactant intactId="EBI-25872486">
        <id>Q96BH6</id>
    </interactant>
    <organismsDiffer>false</organismsDiffer>
    <experiments>3</experiments>
</comment>
<comment type="subcellular location">
    <subcellularLocation>
        <location evidence="5">Nucleus</location>
    </subcellularLocation>
    <text>Colocalizes with ZBTB21 in nucleus in HEK293 cells.</text>
</comment>
<comment type="domain">
    <text>The BTB/POZ domain seems to direct the protein to discrete regions in the nucleus.</text>
</comment>
<comment type="similarity">
    <text evidence="7">Belongs to the krueppel C2H2-type zinc-finger protein family.</text>
</comment>
<protein>
    <recommendedName>
        <fullName>Zinc finger and BTB domain-containing protein 14</fullName>
    </recommendedName>
    <alternativeName>
        <fullName>Zinc finger protein 161 homolog</fullName>
        <shortName>Zfp-161</shortName>
    </alternativeName>
    <alternativeName>
        <fullName>Zinc finger protein 478</fullName>
    </alternativeName>
    <alternativeName>
        <fullName>Zinc finger protein 5 homolog</fullName>
        <shortName>ZF5</shortName>
        <shortName>Zfp-5</shortName>
        <shortName>hZF5</shortName>
    </alternativeName>
</protein>
<keyword id="KW-0010">Activator</keyword>
<keyword id="KW-0238">DNA-binding</keyword>
<keyword id="KW-1017">Isopeptide bond</keyword>
<keyword id="KW-0479">Metal-binding</keyword>
<keyword id="KW-0539">Nucleus</keyword>
<keyword id="KW-1267">Proteomics identification</keyword>
<keyword id="KW-1185">Reference proteome</keyword>
<keyword id="KW-0677">Repeat</keyword>
<keyword id="KW-0678">Repressor</keyword>
<keyword id="KW-0804">Transcription</keyword>
<keyword id="KW-0805">Transcription regulation</keyword>
<keyword id="KW-0832">Ubl conjugation</keyword>
<keyword id="KW-0862">Zinc</keyword>
<keyword id="KW-0863">Zinc-finger</keyword>